<keyword id="KW-0963">Cytoplasm</keyword>
<keyword id="KW-0342">GTP-binding</keyword>
<keyword id="KW-0396">Initiation factor</keyword>
<keyword id="KW-0547">Nucleotide-binding</keyword>
<keyword id="KW-0648">Protein biosynthesis</keyword>
<feature type="chain" id="PRO_0000228237" description="Translation initiation factor IF-2">
    <location>
        <begin position="1"/>
        <end position="829"/>
    </location>
</feature>
<feature type="domain" description="tr-type G">
    <location>
        <begin position="327"/>
        <end position="497"/>
    </location>
</feature>
<feature type="region of interest" description="Disordered" evidence="3">
    <location>
        <begin position="128"/>
        <end position="157"/>
    </location>
</feature>
<feature type="region of interest" description="G1" evidence="1">
    <location>
        <begin position="336"/>
        <end position="343"/>
    </location>
</feature>
<feature type="region of interest" description="G2" evidence="1">
    <location>
        <begin position="361"/>
        <end position="365"/>
    </location>
</feature>
<feature type="region of interest" description="G3" evidence="1">
    <location>
        <begin position="383"/>
        <end position="386"/>
    </location>
</feature>
<feature type="region of interest" description="G4" evidence="1">
    <location>
        <begin position="437"/>
        <end position="440"/>
    </location>
</feature>
<feature type="region of interest" description="G5" evidence="1">
    <location>
        <begin position="473"/>
        <end position="475"/>
    </location>
</feature>
<feature type="compositionally biased region" description="Basic and acidic residues" evidence="3">
    <location>
        <begin position="128"/>
        <end position="137"/>
    </location>
</feature>
<feature type="compositionally biased region" description="Polar residues" evidence="3">
    <location>
        <begin position="140"/>
        <end position="152"/>
    </location>
</feature>
<feature type="binding site" evidence="2">
    <location>
        <begin position="336"/>
        <end position="343"/>
    </location>
    <ligand>
        <name>GTP</name>
        <dbReference type="ChEBI" id="CHEBI:37565"/>
    </ligand>
</feature>
<feature type="binding site" evidence="2">
    <location>
        <begin position="383"/>
        <end position="387"/>
    </location>
    <ligand>
        <name>GTP</name>
        <dbReference type="ChEBI" id="CHEBI:37565"/>
    </ligand>
</feature>
<feature type="binding site" evidence="2">
    <location>
        <begin position="437"/>
        <end position="440"/>
    </location>
    <ligand>
        <name>GTP</name>
        <dbReference type="ChEBI" id="CHEBI:37565"/>
    </ligand>
</feature>
<reference key="1">
    <citation type="journal article" date="2005" name="PLoS Biol.">
        <title>The genome sequence of Rickettsia felis identifies the first putative conjugative plasmid in an obligate intracellular parasite.</title>
        <authorList>
            <person name="Ogata H."/>
            <person name="Renesto P."/>
            <person name="Audic S."/>
            <person name="Robert C."/>
            <person name="Blanc G."/>
            <person name="Fournier P.-E."/>
            <person name="Parinello H."/>
            <person name="Claverie J.-M."/>
            <person name="Raoult D."/>
        </authorList>
    </citation>
    <scope>NUCLEOTIDE SEQUENCE [LARGE SCALE GENOMIC DNA]</scope>
    <source>
        <strain>ATCC VR-1525 / URRWXCal2</strain>
    </source>
</reference>
<accession>Q4UL51</accession>
<gene>
    <name evidence="2" type="primary">infB</name>
    <name type="ordered locus">RF_0871</name>
</gene>
<comment type="function">
    <text evidence="2">One of the essential components for the initiation of protein synthesis. Protects formylmethionyl-tRNA from spontaneous hydrolysis and promotes its binding to the 30S ribosomal subunits. Also involved in the hydrolysis of GTP during the formation of the 70S ribosomal complex.</text>
</comment>
<comment type="subcellular location">
    <subcellularLocation>
        <location evidence="2">Cytoplasm</location>
    </subcellularLocation>
</comment>
<comment type="similarity">
    <text evidence="2">Belongs to the TRAFAC class translation factor GTPase superfamily. Classic translation factor GTPase family. IF-2 subfamily.</text>
</comment>
<proteinExistence type="inferred from homology"/>
<protein>
    <recommendedName>
        <fullName evidence="2">Translation initiation factor IF-2</fullName>
    </recommendedName>
</protein>
<evidence type="ECO:0000250" key="1"/>
<evidence type="ECO:0000255" key="2">
    <source>
        <dbReference type="HAMAP-Rule" id="MF_00100"/>
    </source>
</evidence>
<evidence type="ECO:0000256" key="3">
    <source>
        <dbReference type="SAM" id="MobiDB-lite"/>
    </source>
</evidence>
<organism>
    <name type="scientific">Rickettsia felis (strain ATCC VR-1525 / URRWXCal2)</name>
    <name type="common">Rickettsia azadi</name>
    <dbReference type="NCBI Taxonomy" id="315456"/>
    <lineage>
        <taxon>Bacteria</taxon>
        <taxon>Pseudomonadati</taxon>
        <taxon>Pseudomonadota</taxon>
        <taxon>Alphaproteobacteria</taxon>
        <taxon>Rickettsiales</taxon>
        <taxon>Rickettsiaceae</taxon>
        <taxon>Rickettsieae</taxon>
        <taxon>Rickettsia</taxon>
        <taxon>spotted fever group</taxon>
    </lineage>
</organism>
<sequence>MTDNQEIKPKKLTLGNSKLSLNKSFDSLTGAQSFVNAKSKTLVEVRKSSTGSTTTLSLNKERNSLDQTAIDANKEEFNRRLSILKKAAEQSKLNDPSQISTLSKLASINQSANSKIETLETEVEQKQQNAEEEKVEASAKTVQNNEDIQPQTSKKKEETFVKSPLVGMRTRYGIESEKELDKTVDNKVVAPKIKLEEPKKFKKADLFNMLGDDESGSGRTRSLASIKRAREKEKRKLVSQAPEKVYREVTIPEVIGVGDLANAMSERVADVIKELMKLGILANASQTIDADTAELVATNLGHTVKRVQESDVENVLISDDKVEDLRTRAPVVTVMGHVDHGKTSLLDALKSTDIAASETGGITQHIGAYRVTIADDRAITFIDTPGHEAFSEMRSRGAKVTDIVIIVVAADDGIKTQTVEAINHAKAAGVPIIVAINKIDKPDIDIERVKNELYVHEIIGEEAGGDVMVIPISALKKINLDKLEEAILLIAEMQDLKASPFGSAAGVVIESKIEKGRGTLTTILVQRGTLRNGDIIIAGSSYGKVKKMTNDKGLEIVEATPSVPVEIQGLNEVPFAGDKFNVVQNEKQAKDIAEYRMRLAKEKKISIAPRSSLEDLFLKASGNSKIKELPLIIKGDVQGSVEAISGSLLKLPSDEIKLRILHSGVGPITESDVSLAHASSAIIVGFNVRAGANALTAAEKEKVDIRYYSIIYNLIDDVKAIMSGMLDPIVREQYIGSVEIRQIFNITKVGKIAGSYVTKGIIKKGAGVRLLRDNVVIHEGKLKTLKRFKDEVKEVREGYECGIAFENYEDIREGDTVEVFELVQEQRQL</sequence>
<dbReference type="EMBL" id="CP000053">
    <property type="protein sequence ID" value="AAY61722.1"/>
    <property type="molecule type" value="Genomic_DNA"/>
</dbReference>
<dbReference type="SMR" id="Q4UL51"/>
<dbReference type="STRING" id="315456.RF_0871"/>
<dbReference type="KEGG" id="rfe:RF_0871"/>
<dbReference type="eggNOG" id="COG0532">
    <property type="taxonomic scope" value="Bacteria"/>
</dbReference>
<dbReference type="HOGENOM" id="CLU_006301_10_2_5"/>
<dbReference type="OrthoDB" id="9811804at2"/>
<dbReference type="Proteomes" id="UP000008548">
    <property type="component" value="Chromosome"/>
</dbReference>
<dbReference type="GO" id="GO:0005737">
    <property type="term" value="C:cytoplasm"/>
    <property type="evidence" value="ECO:0007669"/>
    <property type="project" value="UniProtKB-SubCell"/>
</dbReference>
<dbReference type="GO" id="GO:0005525">
    <property type="term" value="F:GTP binding"/>
    <property type="evidence" value="ECO:0007669"/>
    <property type="project" value="UniProtKB-KW"/>
</dbReference>
<dbReference type="GO" id="GO:0003924">
    <property type="term" value="F:GTPase activity"/>
    <property type="evidence" value="ECO:0007669"/>
    <property type="project" value="UniProtKB-UniRule"/>
</dbReference>
<dbReference type="GO" id="GO:0097216">
    <property type="term" value="F:guanosine tetraphosphate binding"/>
    <property type="evidence" value="ECO:0007669"/>
    <property type="project" value="UniProtKB-ARBA"/>
</dbReference>
<dbReference type="GO" id="GO:0003743">
    <property type="term" value="F:translation initiation factor activity"/>
    <property type="evidence" value="ECO:0007669"/>
    <property type="project" value="UniProtKB-UniRule"/>
</dbReference>
<dbReference type="CDD" id="cd01887">
    <property type="entry name" value="IF2_eIF5B"/>
    <property type="match status" value="1"/>
</dbReference>
<dbReference type="CDD" id="cd03702">
    <property type="entry name" value="IF2_mtIF2_II"/>
    <property type="match status" value="1"/>
</dbReference>
<dbReference type="CDD" id="cd03692">
    <property type="entry name" value="mtIF2_IVc"/>
    <property type="match status" value="1"/>
</dbReference>
<dbReference type="FunFam" id="2.40.30.10:FF:000008">
    <property type="entry name" value="Translation initiation factor IF-2"/>
    <property type="match status" value="1"/>
</dbReference>
<dbReference type="FunFam" id="2.40.30.10:FF:000054">
    <property type="entry name" value="Translation initiation factor IF-2"/>
    <property type="match status" value="1"/>
</dbReference>
<dbReference type="FunFam" id="3.40.50.10050:FF:000001">
    <property type="entry name" value="Translation initiation factor IF-2"/>
    <property type="match status" value="1"/>
</dbReference>
<dbReference type="FunFam" id="3.40.50.300:FF:000019">
    <property type="entry name" value="Translation initiation factor IF-2"/>
    <property type="match status" value="1"/>
</dbReference>
<dbReference type="Gene3D" id="3.40.50.300">
    <property type="entry name" value="P-loop containing nucleotide triphosphate hydrolases"/>
    <property type="match status" value="1"/>
</dbReference>
<dbReference type="Gene3D" id="2.40.30.10">
    <property type="entry name" value="Translation factors"/>
    <property type="match status" value="2"/>
</dbReference>
<dbReference type="Gene3D" id="3.40.50.10050">
    <property type="entry name" value="Translation initiation factor IF- 2, domain 3"/>
    <property type="match status" value="1"/>
</dbReference>
<dbReference type="HAMAP" id="MF_00100_B">
    <property type="entry name" value="IF_2_B"/>
    <property type="match status" value="1"/>
</dbReference>
<dbReference type="InterPro" id="IPR053905">
    <property type="entry name" value="EF-G-like_DII"/>
</dbReference>
<dbReference type="InterPro" id="IPR004161">
    <property type="entry name" value="EFTu-like_2"/>
</dbReference>
<dbReference type="InterPro" id="IPR044145">
    <property type="entry name" value="IF2_II"/>
</dbReference>
<dbReference type="InterPro" id="IPR006847">
    <property type="entry name" value="IF2_N"/>
</dbReference>
<dbReference type="InterPro" id="IPR027417">
    <property type="entry name" value="P-loop_NTPase"/>
</dbReference>
<dbReference type="InterPro" id="IPR005225">
    <property type="entry name" value="Small_GTP-bd"/>
</dbReference>
<dbReference type="InterPro" id="IPR000795">
    <property type="entry name" value="T_Tr_GTP-bd_dom"/>
</dbReference>
<dbReference type="InterPro" id="IPR000178">
    <property type="entry name" value="TF_IF2_bacterial-like"/>
</dbReference>
<dbReference type="InterPro" id="IPR015760">
    <property type="entry name" value="TIF_IF2"/>
</dbReference>
<dbReference type="InterPro" id="IPR023115">
    <property type="entry name" value="TIF_IF2_dom3"/>
</dbReference>
<dbReference type="InterPro" id="IPR036925">
    <property type="entry name" value="TIF_IF2_dom3_sf"/>
</dbReference>
<dbReference type="InterPro" id="IPR009000">
    <property type="entry name" value="Transl_B-barrel_sf"/>
</dbReference>
<dbReference type="NCBIfam" id="TIGR00487">
    <property type="entry name" value="IF-2"/>
    <property type="match status" value="1"/>
</dbReference>
<dbReference type="NCBIfam" id="TIGR00231">
    <property type="entry name" value="small_GTP"/>
    <property type="match status" value="1"/>
</dbReference>
<dbReference type="PANTHER" id="PTHR43381:SF5">
    <property type="entry name" value="TR-TYPE G DOMAIN-CONTAINING PROTEIN"/>
    <property type="match status" value="1"/>
</dbReference>
<dbReference type="PANTHER" id="PTHR43381">
    <property type="entry name" value="TRANSLATION INITIATION FACTOR IF-2-RELATED"/>
    <property type="match status" value="1"/>
</dbReference>
<dbReference type="Pfam" id="PF22042">
    <property type="entry name" value="EF-G_D2"/>
    <property type="match status" value="1"/>
</dbReference>
<dbReference type="Pfam" id="PF00009">
    <property type="entry name" value="GTP_EFTU"/>
    <property type="match status" value="1"/>
</dbReference>
<dbReference type="Pfam" id="PF03144">
    <property type="entry name" value="GTP_EFTU_D2"/>
    <property type="match status" value="1"/>
</dbReference>
<dbReference type="Pfam" id="PF11987">
    <property type="entry name" value="IF-2"/>
    <property type="match status" value="1"/>
</dbReference>
<dbReference type="Pfam" id="PF04760">
    <property type="entry name" value="IF2_N"/>
    <property type="match status" value="1"/>
</dbReference>
<dbReference type="SUPFAM" id="SSF52156">
    <property type="entry name" value="Initiation factor IF2/eIF5b, domain 3"/>
    <property type="match status" value="1"/>
</dbReference>
<dbReference type="SUPFAM" id="SSF52540">
    <property type="entry name" value="P-loop containing nucleoside triphosphate hydrolases"/>
    <property type="match status" value="1"/>
</dbReference>
<dbReference type="SUPFAM" id="SSF50447">
    <property type="entry name" value="Translation proteins"/>
    <property type="match status" value="2"/>
</dbReference>
<dbReference type="PROSITE" id="PS51722">
    <property type="entry name" value="G_TR_2"/>
    <property type="match status" value="1"/>
</dbReference>
<dbReference type="PROSITE" id="PS01176">
    <property type="entry name" value="IF2"/>
    <property type="match status" value="1"/>
</dbReference>
<name>IF2_RICFE</name>